<reference key="1">
    <citation type="journal article" date="2010" name="PLoS Genet.">
        <title>Genome sequence of the plant growth promoting endophytic bacterium Enterobacter sp. 638.</title>
        <authorList>
            <person name="Taghavi S."/>
            <person name="van der Lelie D."/>
            <person name="Hoffman A."/>
            <person name="Zhang Y.B."/>
            <person name="Walla M.D."/>
            <person name="Vangronsveld J."/>
            <person name="Newman L."/>
            <person name="Monchy S."/>
        </authorList>
    </citation>
    <scope>NUCLEOTIDE SEQUENCE [LARGE SCALE GENOMIC DNA]</scope>
    <source>
        <strain>638</strain>
    </source>
</reference>
<accession>A4W8Q9</accession>
<organism>
    <name type="scientific">Enterobacter sp. (strain 638)</name>
    <dbReference type="NCBI Taxonomy" id="399742"/>
    <lineage>
        <taxon>Bacteria</taxon>
        <taxon>Pseudomonadati</taxon>
        <taxon>Pseudomonadota</taxon>
        <taxon>Gammaproteobacteria</taxon>
        <taxon>Enterobacterales</taxon>
        <taxon>Enterobacteriaceae</taxon>
        <taxon>Enterobacter</taxon>
    </lineage>
</organism>
<gene>
    <name evidence="1" type="primary">aat</name>
    <name type="ordered locus">Ent638_1409</name>
</gene>
<keyword id="KW-0012">Acyltransferase</keyword>
<keyword id="KW-0963">Cytoplasm</keyword>
<keyword id="KW-0808">Transferase</keyword>
<proteinExistence type="inferred from homology"/>
<comment type="function">
    <text evidence="1">Functions in the N-end rule pathway of protein degradation where it conjugates Leu, Phe and, less efficiently, Met from aminoacyl-tRNAs to the N-termini of proteins containing an N-terminal arginine or lysine.</text>
</comment>
<comment type="catalytic activity">
    <reaction evidence="1">
        <text>N-terminal L-lysyl-[protein] + L-leucyl-tRNA(Leu) = N-terminal L-leucyl-L-lysyl-[protein] + tRNA(Leu) + H(+)</text>
        <dbReference type="Rhea" id="RHEA:12340"/>
        <dbReference type="Rhea" id="RHEA-COMP:9613"/>
        <dbReference type="Rhea" id="RHEA-COMP:9622"/>
        <dbReference type="Rhea" id="RHEA-COMP:12670"/>
        <dbReference type="Rhea" id="RHEA-COMP:12671"/>
        <dbReference type="ChEBI" id="CHEBI:15378"/>
        <dbReference type="ChEBI" id="CHEBI:65249"/>
        <dbReference type="ChEBI" id="CHEBI:78442"/>
        <dbReference type="ChEBI" id="CHEBI:78494"/>
        <dbReference type="ChEBI" id="CHEBI:133043"/>
        <dbReference type="EC" id="2.3.2.6"/>
    </reaction>
</comment>
<comment type="catalytic activity">
    <reaction evidence="1">
        <text>N-terminal L-arginyl-[protein] + L-leucyl-tRNA(Leu) = N-terminal L-leucyl-L-arginyl-[protein] + tRNA(Leu) + H(+)</text>
        <dbReference type="Rhea" id="RHEA:50416"/>
        <dbReference type="Rhea" id="RHEA-COMP:9613"/>
        <dbReference type="Rhea" id="RHEA-COMP:9622"/>
        <dbReference type="Rhea" id="RHEA-COMP:12672"/>
        <dbReference type="Rhea" id="RHEA-COMP:12673"/>
        <dbReference type="ChEBI" id="CHEBI:15378"/>
        <dbReference type="ChEBI" id="CHEBI:64719"/>
        <dbReference type="ChEBI" id="CHEBI:78442"/>
        <dbReference type="ChEBI" id="CHEBI:78494"/>
        <dbReference type="ChEBI" id="CHEBI:133044"/>
        <dbReference type="EC" id="2.3.2.6"/>
    </reaction>
</comment>
<comment type="catalytic activity">
    <reaction evidence="1">
        <text>L-phenylalanyl-tRNA(Phe) + an N-terminal L-alpha-aminoacyl-[protein] = an N-terminal L-phenylalanyl-L-alpha-aminoacyl-[protein] + tRNA(Phe)</text>
        <dbReference type="Rhea" id="RHEA:43632"/>
        <dbReference type="Rhea" id="RHEA-COMP:9668"/>
        <dbReference type="Rhea" id="RHEA-COMP:9699"/>
        <dbReference type="Rhea" id="RHEA-COMP:10636"/>
        <dbReference type="Rhea" id="RHEA-COMP:10637"/>
        <dbReference type="ChEBI" id="CHEBI:78442"/>
        <dbReference type="ChEBI" id="CHEBI:78531"/>
        <dbReference type="ChEBI" id="CHEBI:78597"/>
        <dbReference type="ChEBI" id="CHEBI:83561"/>
        <dbReference type="EC" id="2.3.2.6"/>
    </reaction>
</comment>
<comment type="subcellular location">
    <subcellularLocation>
        <location evidence="1">Cytoplasm</location>
    </subcellularLocation>
</comment>
<comment type="similarity">
    <text evidence="1">Belongs to the L/F-transferase family.</text>
</comment>
<evidence type="ECO:0000255" key="1">
    <source>
        <dbReference type="HAMAP-Rule" id="MF_00688"/>
    </source>
</evidence>
<dbReference type="EC" id="2.3.2.6" evidence="1"/>
<dbReference type="EMBL" id="CP000653">
    <property type="protein sequence ID" value="ABP60089.1"/>
    <property type="molecule type" value="Genomic_DNA"/>
</dbReference>
<dbReference type="RefSeq" id="WP_012016807.1">
    <property type="nucleotide sequence ID" value="NC_009436.1"/>
</dbReference>
<dbReference type="SMR" id="A4W8Q9"/>
<dbReference type="STRING" id="399742.Ent638_1409"/>
<dbReference type="KEGG" id="ent:Ent638_1409"/>
<dbReference type="eggNOG" id="COG2360">
    <property type="taxonomic scope" value="Bacteria"/>
</dbReference>
<dbReference type="HOGENOM" id="CLU_075045_0_0_6"/>
<dbReference type="OrthoDB" id="9790282at2"/>
<dbReference type="Proteomes" id="UP000000230">
    <property type="component" value="Chromosome"/>
</dbReference>
<dbReference type="GO" id="GO:0005737">
    <property type="term" value="C:cytoplasm"/>
    <property type="evidence" value="ECO:0007669"/>
    <property type="project" value="UniProtKB-SubCell"/>
</dbReference>
<dbReference type="GO" id="GO:0008914">
    <property type="term" value="F:leucyl-tRNA--protein transferase activity"/>
    <property type="evidence" value="ECO:0007669"/>
    <property type="project" value="UniProtKB-UniRule"/>
</dbReference>
<dbReference type="GO" id="GO:0030163">
    <property type="term" value="P:protein catabolic process"/>
    <property type="evidence" value="ECO:0007669"/>
    <property type="project" value="UniProtKB-UniRule"/>
</dbReference>
<dbReference type="FunFam" id="3.30.70.3550:FF:000001">
    <property type="entry name" value="Leucyl/phenylalanyl-tRNA--protein transferase"/>
    <property type="match status" value="1"/>
</dbReference>
<dbReference type="FunFam" id="3.40.630.70:FF:000001">
    <property type="entry name" value="Leucyl/phenylalanyl-tRNA--protein transferase"/>
    <property type="match status" value="1"/>
</dbReference>
<dbReference type="Gene3D" id="3.40.630.70">
    <property type="entry name" value="Leucyl/phenylalanyl-tRNA-protein transferase, C-terminal domain"/>
    <property type="match status" value="1"/>
</dbReference>
<dbReference type="Gene3D" id="3.30.70.3550">
    <property type="entry name" value="Leucyl/phenylalanyl-tRNA-protein transferase, N-terminal domain"/>
    <property type="match status" value="1"/>
</dbReference>
<dbReference type="HAMAP" id="MF_00688">
    <property type="entry name" value="Leu_Phe_trans"/>
    <property type="match status" value="1"/>
</dbReference>
<dbReference type="InterPro" id="IPR016181">
    <property type="entry name" value="Acyl_CoA_acyltransferase"/>
</dbReference>
<dbReference type="InterPro" id="IPR004616">
    <property type="entry name" value="Leu/Phe-tRNA_Trfase"/>
</dbReference>
<dbReference type="InterPro" id="IPR042203">
    <property type="entry name" value="Leu/Phe-tRNA_Trfase_C"/>
</dbReference>
<dbReference type="InterPro" id="IPR042221">
    <property type="entry name" value="Leu/Phe-tRNA_Trfase_N"/>
</dbReference>
<dbReference type="NCBIfam" id="TIGR00667">
    <property type="entry name" value="aat"/>
    <property type="match status" value="1"/>
</dbReference>
<dbReference type="PANTHER" id="PTHR30098">
    <property type="entry name" value="LEUCYL/PHENYLALANYL-TRNA--PROTEIN TRANSFERASE"/>
    <property type="match status" value="1"/>
</dbReference>
<dbReference type="PANTHER" id="PTHR30098:SF2">
    <property type="entry name" value="LEUCYL_PHENYLALANYL-TRNA--PROTEIN TRANSFERASE"/>
    <property type="match status" value="1"/>
</dbReference>
<dbReference type="Pfam" id="PF03588">
    <property type="entry name" value="Leu_Phe_trans"/>
    <property type="match status" value="1"/>
</dbReference>
<dbReference type="SUPFAM" id="SSF55729">
    <property type="entry name" value="Acyl-CoA N-acyltransferases (Nat)"/>
    <property type="match status" value="1"/>
</dbReference>
<name>LFTR_ENT38</name>
<sequence length="234" mass="26446">MRLVQLSRHNIAFPSPEGALREPNGLLALGGDLSPARLLMAYQRGIFPWFSPGDPILWWSPDPRAILEPSQFHLSRSMKRFHAKSPYRVTLNYAFGQVIEGCAADRDEGTWITHDIINAYLRLHELGYAHSIEVWDNDTLVGGMYGVAQGTLFCGESMFSRAVNASKTALLVFCQEFSLRGGQLMDCQVLNEHTASLGAVEITRRHYLDELGNLRQQKLPQNFWVPRTLFMPQV</sequence>
<feature type="chain" id="PRO_1000062006" description="Leucyl/phenylalanyl-tRNA--protein transferase">
    <location>
        <begin position="1"/>
        <end position="234"/>
    </location>
</feature>
<protein>
    <recommendedName>
        <fullName evidence="1">Leucyl/phenylalanyl-tRNA--protein transferase</fullName>
        <ecNumber evidence="1">2.3.2.6</ecNumber>
    </recommendedName>
    <alternativeName>
        <fullName evidence="1">L/F-transferase</fullName>
    </alternativeName>
    <alternativeName>
        <fullName evidence="1">Leucyltransferase</fullName>
    </alternativeName>
    <alternativeName>
        <fullName evidence="1">Phenyalanyltransferase</fullName>
    </alternativeName>
</protein>